<proteinExistence type="inferred from homology"/>
<accession>Q4ZL08</accession>
<sequence>MKRTFQPSTIKRARTHGFRARMATKNGRAVLSRRRAKGRKRLAV</sequence>
<comment type="similarity">
    <text evidence="1">Belongs to the bacterial ribosomal protein bL34 family.</text>
</comment>
<organism>
    <name type="scientific">Pseudomonas syringae pv. syringae (strain B728a)</name>
    <dbReference type="NCBI Taxonomy" id="205918"/>
    <lineage>
        <taxon>Bacteria</taxon>
        <taxon>Pseudomonadati</taxon>
        <taxon>Pseudomonadota</taxon>
        <taxon>Gammaproteobacteria</taxon>
        <taxon>Pseudomonadales</taxon>
        <taxon>Pseudomonadaceae</taxon>
        <taxon>Pseudomonas</taxon>
        <taxon>Pseudomonas syringae</taxon>
    </lineage>
</organism>
<protein>
    <recommendedName>
        <fullName evidence="1">Large ribosomal subunit protein bL34</fullName>
    </recommendedName>
    <alternativeName>
        <fullName evidence="2">50S ribosomal protein L34</fullName>
    </alternativeName>
</protein>
<evidence type="ECO:0000255" key="1">
    <source>
        <dbReference type="HAMAP-Rule" id="MF_00391"/>
    </source>
</evidence>
<evidence type="ECO:0000305" key="2"/>
<gene>
    <name evidence="1" type="primary">rpmH</name>
    <name type="ordered locus">Psyr_5137</name>
</gene>
<reference key="1">
    <citation type="journal article" date="2005" name="Proc. Natl. Acad. Sci. U.S.A.">
        <title>Comparison of the complete genome sequences of Pseudomonas syringae pv. syringae B728a and pv. tomato DC3000.</title>
        <authorList>
            <person name="Feil H."/>
            <person name="Feil W.S."/>
            <person name="Chain P."/>
            <person name="Larimer F."/>
            <person name="Dibartolo G."/>
            <person name="Copeland A."/>
            <person name="Lykidis A."/>
            <person name="Trong S."/>
            <person name="Nolan M."/>
            <person name="Goltsman E."/>
            <person name="Thiel J."/>
            <person name="Malfatti S."/>
            <person name="Loper J.E."/>
            <person name="Lapidus A."/>
            <person name="Detter J.C."/>
            <person name="Land M."/>
            <person name="Richardson P.M."/>
            <person name="Kyrpides N.C."/>
            <person name="Ivanova N."/>
            <person name="Lindow S.E."/>
        </authorList>
    </citation>
    <scope>NUCLEOTIDE SEQUENCE [LARGE SCALE GENOMIC DNA]</scope>
    <source>
        <strain>B728a</strain>
    </source>
</reference>
<name>RL34_PSEU2</name>
<keyword id="KW-0687">Ribonucleoprotein</keyword>
<keyword id="KW-0689">Ribosomal protein</keyword>
<feature type="chain" id="PRO_1000013412" description="Large ribosomal subunit protein bL34">
    <location>
        <begin position="1"/>
        <end position="44"/>
    </location>
</feature>
<dbReference type="EMBL" id="CP000075">
    <property type="protein sequence ID" value="AAY40164.1"/>
    <property type="molecule type" value="Genomic_DNA"/>
</dbReference>
<dbReference type="RefSeq" id="WP_002551315.1">
    <property type="nucleotide sequence ID" value="NC_007005.1"/>
</dbReference>
<dbReference type="RefSeq" id="YP_238202.1">
    <property type="nucleotide sequence ID" value="NC_007005.1"/>
</dbReference>
<dbReference type="SMR" id="Q4ZL08"/>
<dbReference type="STRING" id="205918.Psyr_5137"/>
<dbReference type="GeneID" id="98280769"/>
<dbReference type="KEGG" id="psb:Psyr_5137"/>
<dbReference type="PATRIC" id="fig|205918.7.peg.5298"/>
<dbReference type="eggNOG" id="COG0230">
    <property type="taxonomic scope" value="Bacteria"/>
</dbReference>
<dbReference type="HOGENOM" id="CLU_129938_2_0_6"/>
<dbReference type="OrthoDB" id="9804164at2"/>
<dbReference type="Proteomes" id="UP000000426">
    <property type="component" value="Chromosome"/>
</dbReference>
<dbReference type="GO" id="GO:1990904">
    <property type="term" value="C:ribonucleoprotein complex"/>
    <property type="evidence" value="ECO:0007669"/>
    <property type="project" value="UniProtKB-KW"/>
</dbReference>
<dbReference type="GO" id="GO:0005840">
    <property type="term" value="C:ribosome"/>
    <property type="evidence" value="ECO:0007669"/>
    <property type="project" value="UniProtKB-KW"/>
</dbReference>
<dbReference type="GO" id="GO:0003735">
    <property type="term" value="F:structural constituent of ribosome"/>
    <property type="evidence" value="ECO:0007669"/>
    <property type="project" value="InterPro"/>
</dbReference>
<dbReference type="GO" id="GO:0006412">
    <property type="term" value="P:translation"/>
    <property type="evidence" value="ECO:0007669"/>
    <property type="project" value="UniProtKB-UniRule"/>
</dbReference>
<dbReference type="FunFam" id="1.10.287.3980:FF:000001">
    <property type="entry name" value="Mitochondrial ribosomal protein L34"/>
    <property type="match status" value="1"/>
</dbReference>
<dbReference type="Gene3D" id="1.10.287.3980">
    <property type="match status" value="1"/>
</dbReference>
<dbReference type="HAMAP" id="MF_00391">
    <property type="entry name" value="Ribosomal_bL34"/>
    <property type="match status" value="1"/>
</dbReference>
<dbReference type="InterPro" id="IPR000271">
    <property type="entry name" value="Ribosomal_bL34"/>
</dbReference>
<dbReference type="InterPro" id="IPR020939">
    <property type="entry name" value="Ribosomal_bL34_CS"/>
</dbReference>
<dbReference type="NCBIfam" id="TIGR01030">
    <property type="entry name" value="rpmH_bact"/>
    <property type="match status" value="1"/>
</dbReference>
<dbReference type="PANTHER" id="PTHR14503:SF4">
    <property type="entry name" value="LARGE RIBOSOMAL SUBUNIT PROTEIN BL34M"/>
    <property type="match status" value="1"/>
</dbReference>
<dbReference type="PANTHER" id="PTHR14503">
    <property type="entry name" value="MITOCHONDRIAL RIBOSOMAL PROTEIN 34 FAMILY MEMBER"/>
    <property type="match status" value="1"/>
</dbReference>
<dbReference type="Pfam" id="PF00468">
    <property type="entry name" value="Ribosomal_L34"/>
    <property type="match status" value="1"/>
</dbReference>
<dbReference type="PROSITE" id="PS00784">
    <property type="entry name" value="RIBOSOMAL_L34"/>
    <property type="match status" value="1"/>
</dbReference>